<reference key="1">
    <citation type="journal article" date="2010" name="PLoS ONE">
        <title>Genome sequence of Cronobacter sakazakii BAA-894 and comparative genomic hybridization analysis with other Cronobacter species.</title>
        <authorList>
            <person name="Kucerova E."/>
            <person name="Clifton S.W."/>
            <person name="Xia X.Q."/>
            <person name="Long F."/>
            <person name="Porwollik S."/>
            <person name="Fulton L."/>
            <person name="Fronick C."/>
            <person name="Minx P."/>
            <person name="Kyung K."/>
            <person name="Warren W."/>
            <person name="Fulton R."/>
            <person name="Feng D."/>
            <person name="Wollam A."/>
            <person name="Shah N."/>
            <person name="Bhonagiri V."/>
            <person name="Nash W.E."/>
            <person name="Hallsworth-Pepin K."/>
            <person name="Wilson R.K."/>
            <person name="McClelland M."/>
            <person name="Forsythe S.J."/>
        </authorList>
    </citation>
    <scope>NUCLEOTIDE SEQUENCE [LARGE SCALE GENOMIC DNA]</scope>
    <source>
        <strain>ATCC BAA-894</strain>
    </source>
</reference>
<gene>
    <name evidence="1" type="primary">lepA</name>
    <name type="ordered locus">ESA_00690</name>
</gene>
<keyword id="KW-0997">Cell inner membrane</keyword>
<keyword id="KW-1003">Cell membrane</keyword>
<keyword id="KW-0342">GTP-binding</keyword>
<keyword id="KW-0378">Hydrolase</keyword>
<keyword id="KW-0472">Membrane</keyword>
<keyword id="KW-0547">Nucleotide-binding</keyword>
<keyword id="KW-0648">Protein biosynthesis</keyword>
<keyword id="KW-1185">Reference proteome</keyword>
<proteinExistence type="inferred from homology"/>
<comment type="function">
    <text evidence="1">Required for accurate and efficient protein synthesis under certain stress conditions. May act as a fidelity factor of the translation reaction, by catalyzing a one-codon backward translocation of tRNAs on improperly translocated ribosomes. Back-translocation proceeds from a post-translocation (POST) complex to a pre-translocation (PRE) complex, thus giving elongation factor G a second chance to translocate the tRNAs correctly. Binds to ribosomes in a GTP-dependent manner.</text>
</comment>
<comment type="catalytic activity">
    <reaction evidence="1">
        <text>GTP + H2O = GDP + phosphate + H(+)</text>
        <dbReference type="Rhea" id="RHEA:19669"/>
        <dbReference type="ChEBI" id="CHEBI:15377"/>
        <dbReference type="ChEBI" id="CHEBI:15378"/>
        <dbReference type="ChEBI" id="CHEBI:37565"/>
        <dbReference type="ChEBI" id="CHEBI:43474"/>
        <dbReference type="ChEBI" id="CHEBI:58189"/>
        <dbReference type="EC" id="3.6.5.n1"/>
    </reaction>
</comment>
<comment type="subcellular location">
    <subcellularLocation>
        <location evidence="1">Cell inner membrane</location>
        <topology evidence="1">Peripheral membrane protein</topology>
        <orientation evidence="1">Cytoplasmic side</orientation>
    </subcellularLocation>
</comment>
<comment type="similarity">
    <text evidence="1">Belongs to the TRAFAC class translation factor GTPase superfamily. Classic translation factor GTPase family. LepA subfamily.</text>
</comment>
<sequence>MKNIRNFSIIAHIDHGKSTLSDRIIQICGGLSDREMEAQVLDSMDLERERGITIKAQSVTLDYKASDGETYQLNFIDTPGHVDFSYEVSRSLAACEGALLVVDAGQGVEAQTLANCYTAIEMDLEVVPVLNKIDLPAADPERVAEEIEDIVGIDATDAVRCSAKTGVGVQDVLERLVRDIPPPEGDPDAPLQALIIDSWFDNYLGVVSLIRVKNGTLRKGDKVKVMSTGQTYNADRLGIFTPKQIDRTELKCGEVGWLVCAIKDILGAPVGDTLTLARNPAEKALPGFKKVKPQVYAGLFPVSSDDYESFRDALGKLSLNDASLFYEPESSTALGFGFRCGFLGLLHMEIIQERLEREYDLDLITTAPTVVYEVQMTNNEVVYVDSPSKLPPLNNIQELREPIAECHMLLPQEYLGNVITLCVEKRGVQTNMVYHGNQVALTYEIPMAEVVLDFFDRLKSTSRGYASLDYNFKRFQASNMVRVDVLINGERVDALALITHNDNAPYRGRELVEKMKDLIPRQQFDIAIQAAIGNHIIARSTVKQLRKNVLAKCYGGDVSRKKKLLQKQKEGKKRMKQVGNVELPQEAFLAILHVGKDGK</sequence>
<feature type="chain" id="PRO_1000031994" description="Elongation factor 4">
    <location>
        <begin position="1"/>
        <end position="599"/>
    </location>
</feature>
<feature type="domain" description="tr-type G">
    <location>
        <begin position="2"/>
        <end position="184"/>
    </location>
</feature>
<feature type="binding site" evidence="1">
    <location>
        <begin position="14"/>
        <end position="19"/>
    </location>
    <ligand>
        <name>GTP</name>
        <dbReference type="ChEBI" id="CHEBI:37565"/>
    </ligand>
</feature>
<feature type="binding site" evidence="1">
    <location>
        <begin position="131"/>
        <end position="134"/>
    </location>
    <ligand>
        <name>GTP</name>
        <dbReference type="ChEBI" id="CHEBI:37565"/>
    </ligand>
</feature>
<name>LEPA_CROS8</name>
<evidence type="ECO:0000255" key="1">
    <source>
        <dbReference type="HAMAP-Rule" id="MF_00071"/>
    </source>
</evidence>
<accession>A7MH13</accession>
<organism>
    <name type="scientific">Cronobacter sakazakii (strain ATCC BAA-894)</name>
    <name type="common">Enterobacter sakazakii</name>
    <dbReference type="NCBI Taxonomy" id="290339"/>
    <lineage>
        <taxon>Bacteria</taxon>
        <taxon>Pseudomonadati</taxon>
        <taxon>Pseudomonadota</taxon>
        <taxon>Gammaproteobacteria</taxon>
        <taxon>Enterobacterales</taxon>
        <taxon>Enterobacteriaceae</taxon>
        <taxon>Cronobacter</taxon>
    </lineage>
</organism>
<protein>
    <recommendedName>
        <fullName evidence="1">Elongation factor 4</fullName>
        <shortName evidence="1">EF-4</shortName>
        <ecNumber evidence="1">3.6.5.n1</ecNumber>
    </recommendedName>
    <alternativeName>
        <fullName evidence="1">Ribosomal back-translocase LepA</fullName>
    </alternativeName>
</protein>
<dbReference type="EC" id="3.6.5.n1" evidence="1"/>
<dbReference type="EMBL" id="CP000783">
    <property type="protein sequence ID" value="ABU75969.1"/>
    <property type="molecule type" value="Genomic_DNA"/>
</dbReference>
<dbReference type="RefSeq" id="WP_004387377.1">
    <property type="nucleotide sequence ID" value="NC_009778.1"/>
</dbReference>
<dbReference type="SMR" id="A7MH13"/>
<dbReference type="GeneID" id="56729579"/>
<dbReference type="KEGG" id="esa:ESA_00690"/>
<dbReference type="HOGENOM" id="CLU_009995_3_3_6"/>
<dbReference type="Proteomes" id="UP000000260">
    <property type="component" value="Chromosome"/>
</dbReference>
<dbReference type="GO" id="GO:0005886">
    <property type="term" value="C:plasma membrane"/>
    <property type="evidence" value="ECO:0007669"/>
    <property type="project" value="UniProtKB-SubCell"/>
</dbReference>
<dbReference type="GO" id="GO:0005525">
    <property type="term" value="F:GTP binding"/>
    <property type="evidence" value="ECO:0007669"/>
    <property type="project" value="UniProtKB-UniRule"/>
</dbReference>
<dbReference type="GO" id="GO:0003924">
    <property type="term" value="F:GTPase activity"/>
    <property type="evidence" value="ECO:0007669"/>
    <property type="project" value="UniProtKB-UniRule"/>
</dbReference>
<dbReference type="GO" id="GO:0097216">
    <property type="term" value="F:guanosine tetraphosphate binding"/>
    <property type="evidence" value="ECO:0007669"/>
    <property type="project" value="UniProtKB-ARBA"/>
</dbReference>
<dbReference type="GO" id="GO:0043022">
    <property type="term" value="F:ribosome binding"/>
    <property type="evidence" value="ECO:0007669"/>
    <property type="project" value="UniProtKB-UniRule"/>
</dbReference>
<dbReference type="GO" id="GO:0003746">
    <property type="term" value="F:translation elongation factor activity"/>
    <property type="evidence" value="ECO:0007669"/>
    <property type="project" value="UniProtKB-UniRule"/>
</dbReference>
<dbReference type="GO" id="GO:0045727">
    <property type="term" value="P:positive regulation of translation"/>
    <property type="evidence" value="ECO:0007669"/>
    <property type="project" value="UniProtKB-UniRule"/>
</dbReference>
<dbReference type="CDD" id="cd03699">
    <property type="entry name" value="EF4_II"/>
    <property type="match status" value="1"/>
</dbReference>
<dbReference type="CDD" id="cd16260">
    <property type="entry name" value="EF4_III"/>
    <property type="match status" value="1"/>
</dbReference>
<dbReference type="CDD" id="cd01890">
    <property type="entry name" value="LepA"/>
    <property type="match status" value="1"/>
</dbReference>
<dbReference type="CDD" id="cd03709">
    <property type="entry name" value="lepA_C"/>
    <property type="match status" value="1"/>
</dbReference>
<dbReference type="FunFam" id="3.30.70.240:FF:000005">
    <property type="entry name" value="Elongation factor 4"/>
    <property type="match status" value="1"/>
</dbReference>
<dbReference type="FunFam" id="3.40.50.300:FF:000078">
    <property type="entry name" value="Elongation factor 4"/>
    <property type="match status" value="1"/>
</dbReference>
<dbReference type="FunFam" id="2.40.30.10:FF:000015">
    <property type="entry name" value="Translation factor GUF1, mitochondrial"/>
    <property type="match status" value="1"/>
</dbReference>
<dbReference type="FunFam" id="3.30.70.2570:FF:000001">
    <property type="entry name" value="Translation factor GUF1, mitochondrial"/>
    <property type="match status" value="1"/>
</dbReference>
<dbReference type="FunFam" id="3.30.70.870:FF:000004">
    <property type="entry name" value="Translation factor GUF1, mitochondrial"/>
    <property type="match status" value="1"/>
</dbReference>
<dbReference type="Gene3D" id="3.30.70.240">
    <property type="match status" value="1"/>
</dbReference>
<dbReference type="Gene3D" id="3.30.70.2570">
    <property type="entry name" value="Elongation factor 4, C-terminal domain"/>
    <property type="match status" value="1"/>
</dbReference>
<dbReference type="Gene3D" id="3.30.70.870">
    <property type="entry name" value="Elongation Factor G (Translational Gtpase), domain 3"/>
    <property type="match status" value="1"/>
</dbReference>
<dbReference type="Gene3D" id="3.40.50.300">
    <property type="entry name" value="P-loop containing nucleotide triphosphate hydrolases"/>
    <property type="match status" value="1"/>
</dbReference>
<dbReference type="Gene3D" id="2.40.30.10">
    <property type="entry name" value="Translation factors"/>
    <property type="match status" value="1"/>
</dbReference>
<dbReference type="HAMAP" id="MF_00071">
    <property type="entry name" value="LepA"/>
    <property type="match status" value="1"/>
</dbReference>
<dbReference type="InterPro" id="IPR006297">
    <property type="entry name" value="EF-4"/>
</dbReference>
<dbReference type="InterPro" id="IPR035647">
    <property type="entry name" value="EFG_III/V"/>
</dbReference>
<dbReference type="InterPro" id="IPR000640">
    <property type="entry name" value="EFG_V-like"/>
</dbReference>
<dbReference type="InterPro" id="IPR004161">
    <property type="entry name" value="EFTu-like_2"/>
</dbReference>
<dbReference type="InterPro" id="IPR031157">
    <property type="entry name" value="G_TR_CS"/>
</dbReference>
<dbReference type="InterPro" id="IPR038363">
    <property type="entry name" value="LepA_C_sf"/>
</dbReference>
<dbReference type="InterPro" id="IPR013842">
    <property type="entry name" value="LepA_CTD"/>
</dbReference>
<dbReference type="InterPro" id="IPR035654">
    <property type="entry name" value="LepA_IV"/>
</dbReference>
<dbReference type="InterPro" id="IPR027417">
    <property type="entry name" value="P-loop_NTPase"/>
</dbReference>
<dbReference type="InterPro" id="IPR005225">
    <property type="entry name" value="Small_GTP-bd"/>
</dbReference>
<dbReference type="InterPro" id="IPR000795">
    <property type="entry name" value="T_Tr_GTP-bd_dom"/>
</dbReference>
<dbReference type="NCBIfam" id="TIGR01393">
    <property type="entry name" value="lepA"/>
    <property type="match status" value="1"/>
</dbReference>
<dbReference type="NCBIfam" id="TIGR00231">
    <property type="entry name" value="small_GTP"/>
    <property type="match status" value="1"/>
</dbReference>
<dbReference type="PANTHER" id="PTHR43512:SF4">
    <property type="entry name" value="TRANSLATION FACTOR GUF1 HOMOLOG, CHLOROPLASTIC"/>
    <property type="match status" value="1"/>
</dbReference>
<dbReference type="PANTHER" id="PTHR43512">
    <property type="entry name" value="TRANSLATION FACTOR GUF1-RELATED"/>
    <property type="match status" value="1"/>
</dbReference>
<dbReference type="Pfam" id="PF00679">
    <property type="entry name" value="EFG_C"/>
    <property type="match status" value="1"/>
</dbReference>
<dbReference type="Pfam" id="PF00009">
    <property type="entry name" value="GTP_EFTU"/>
    <property type="match status" value="1"/>
</dbReference>
<dbReference type="Pfam" id="PF03144">
    <property type="entry name" value="GTP_EFTU_D2"/>
    <property type="match status" value="1"/>
</dbReference>
<dbReference type="Pfam" id="PF06421">
    <property type="entry name" value="LepA_C"/>
    <property type="match status" value="1"/>
</dbReference>
<dbReference type="PRINTS" id="PR00315">
    <property type="entry name" value="ELONGATNFCT"/>
</dbReference>
<dbReference type="SUPFAM" id="SSF54980">
    <property type="entry name" value="EF-G C-terminal domain-like"/>
    <property type="match status" value="2"/>
</dbReference>
<dbReference type="SUPFAM" id="SSF52540">
    <property type="entry name" value="P-loop containing nucleoside triphosphate hydrolases"/>
    <property type="match status" value="1"/>
</dbReference>
<dbReference type="PROSITE" id="PS00301">
    <property type="entry name" value="G_TR_1"/>
    <property type="match status" value="1"/>
</dbReference>
<dbReference type="PROSITE" id="PS51722">
    <property type="entry name" value="G_TR_2"/>
    <property type="match status" value="1"/>
</dbReference>